<feature type="chain" id="PRO_0000333332" description="Ribosome biogenesis protein ALB1">
    <location>
        <begin position="1"/>
        <end position="175"/>
    </location>
</feature>
<feature type="region of interest" description="Disordered" evidence="2">
    <location>
        <begin position="1"/>
        <end position="43"/>
    </location>
</feature>
<feature type="region of interest" description="Disordered" evidence="2">
    <location>
        <begin position="72"/>
        <end position="91"/>
    </location>
</feature>
<feature type="compositionally biased region" description="Polar residues" evidence="2">
    <location>
        <begin position="1"/>
        <end position="15"/>
    </location>
</feature>
<feature type="compositionally biased region" description="Basic residues" evidence="2">
    <location>
        <begin position="16"/>
        <end position="29"/>
    </location>
</feature>
<feature type="compositionally biased region" description="Polar residues" evidence="2">
    <location>
        <begin position="72"/>
        <end position="88"/>
    </location>
</feature>
<accession>A6ZQK9</accession>
<proteinExistence type="inferred from homology"/>
<keyword id="KW-0963">Cytoplasm</keyword>
<keyword id="KW-0539">Nucleus</keyword>
<keyword id="KW-0690">Ribosome biogenesis</keyword>
<keyword id="KW-0813">Transport</keyword>
<protein>
    <recommendedName>
        <fullName>Ribosome biogenesis protein ALB1</fullName>
    </recommendedName>
</protein>
<evidence type="ECO:0000250" key="1"/>
<evidence type="ECO:0000256" key="2">
    <source>
        <dbReference type="SAM" id="MobiDB-lite"/>
    </source>
</evidence>
<evidence type="ECO:0000305" key="3"/>
<name>ALB1_YEAS7</name>
<reference key="1">
    <citation type="journal article" date="2007" name="Proc. Natl. Acad. Sci. U.S.A.">
        <title>Genome sequencing and comparative analysis of Saccharomyces cerevisiae strain YJM789.</title>
        <authorList>
            <person name="Wei W."/>
            <person name="McCusker J.H."/>
            <person name="Hyman R.W."/>
            <person name="Jones T."/>
            <person name="Ning Y."/>
            <person name="Cao Z."/>
            <person name="Gu Z."/>
            <person name="Bruno D."/>
            <person name="Miranda M."/>
            <person name="Nguyen M."/>
            <person name="Wilhelmy J."/>
            <person name="Komp C."/>
            <person name="Tamse R."/>
            <person name="Wang X."/>
            <person name="Jia P."/>
            <person name="Luedi P."/>
            <person name="Oefner P.J."/>
            <person name="David L."/>
            <person name="Dietrich F.S."/>
            <person name="Li Y."/>
            <person name="Davis R.W."/>
            <person name="Steinmetz L.M."/>
        </authorList>
    </citation>
    <scope>NUCLEOTIDE SEQUENCE [LARGE SCALE GENOMIC DNA]</scope>
    <source>
        <strain>YJM789</strain>
    </source>
</reference>
<gene>
    <name type="primary">ALB1</name>
    <name type="ORF">SCY_3170</name>
</gene>
<comment type="function">
    <text evidence="1">Involved in proper assembly of pre-ribosomal particles during the biogenesis of the 60S ribosomal subunit. Accompanies the pre-60S particles to the cytoplasm (By similarity).</text>
</comment>
<comment type="subunit">
    <text evidence="1">Component of the nucleoplasmic and cytoplasmic pre-60S ribosomal particles.</text>
</comment>
<comment type="subcellular location">
    <subcellularLocation>
        <location evidence="1">Cytoplasm</location>
    </subcellularLocation>
    <subcellularLocation>
        <location evidence="1">Nucleus</location>
    </subcellularLocation>
</comment>
<comment type="similarity">
    <text evidence="3">Belongs to the ALB1 family.</text>
</comment>
<organism>
    <name type="scientific">Saccharomyces cerevisiae (strain YJM789)</name>
    <name type="common">Baker's yeast</name>
    <dbReference type="NCBI Taxonomy" id="307796"/>
    <lineage>
        <taxon>Eukaryota</taxon>
        <taxon>Fungi</taxon>
        <taxon>Dikarya</taxon>
        <taxon>Ascomycota</taxon>
        <taxon>Saccharomycotina</taxon>
        <taxon>Saccharomycetes</taxon>
        <taxon>Saccharomycetales</taxon>
        <taxon>Saccharomycetaceae</taxon>
        <taxon>Saccharomyces</taxon>
    </lineage>
</organism>
<sequence length="175" mass="19287">MPSKNSINRPKLTSNLHHKVHSLNKKRAQRERAGLLKPARSSVNSKSGEIKSVALDLYFQNKKNESQNSTAVTLQNASSSPASITTRTLSKKRAKKIERNLKYATQRKLLVDASAKLEDEMDIDLDGGKKVKENEKKSSLTLVKEALWSVIDDTASQGLIIENGQGTTLGGPFFP</sequence>
<dbReference type="EMBL" id="AAFW02000044">
    <property type="protein sequence ID" value="EDN63261.1"/>
    <property type="molecule type" value="Genomic_DNA"/>
</dbReference>
<dbReference type="EMDB" id="EMD-26651"/>
<dbReference type="EMDB" id="EMD-26686"/>
<dbReference type="EMDB" id="EMD-26703"/>
<dbReference type="EMDB" id="EMD-26941"/>
<dbReference type="SMR" id="A6ZQK9"/>
<dbReference type="HOGENOM" id="CLU_103824_0_0_1"/>
<dbReference type="Proteomes" id="UP000007060">
    <property type="component" value="Unassembled WGS sequence"/>
</dbReference>
<dbReference type="GO" id="GO:0005737">
    <property type="term" value="C:cytoplasm"/>
    <property type="evidence" value="ECO:0007669"/>
    <property type="project" value="UniProtKB-SubCell"/>
</dbReference>
<dbReference type="GO" id="GO:0005634">
    <property type="term" value="C:nucleus"/>
    <property type="evidence" value="ECO:0007669"/>
    <property type="project" value="UniProtKB-SubCell"/>
</dbReference>
<dbReference type="GO" id="GO:0042254">
    <property type="term" value="P:ribosome biogenesis"/>
    <property type="evidence" value="ECO:0007669"/>
    <property type="project" value="UniProtKB-KW"/>
</dbReference>
<dbReference type="InterPro" id="IPR022784">
    <property type="entry name" value="Ribosome_bgen_Alb1"/>
</dbReference>
<dbReference type="Pfam" id="PF09135">
    <property type="entry name" value="Alb1"/>
    <property type="match status" value="1"/>
</dbReference>